<proteinExistence type="evidence at protein level"/>
<sequence length="1663" mass="180827">MKDAAEELSFARVLLQRVDELEKLFKDREQFLELVSRKLSLVPGAEEVTMVTWEELEQAITDGWRASQAGSETLMGFSKHGGFTSLTSPEGTLSGDSTKQPSIEQALDSASGLGPDRTASGSGGTAHPSDGVSSREQSKVPSGTGRQQQPRARDEAGVPRLHQSSTFQFKSDSDRHRSREKLTSTQPRRNARPGPVQQDLPLARDQPSSVPASQSQVHLRPDRRGLEPTGMNQPGLVPASTYPHGVVPLSMGQLGVPPPEMDDRELIPFVVDEQRMLPPSVPGRDQQGLELPSTDQHGLVSVSAYQHGMTFPGTDQRSMEPLGMDQRGCVISGMGQQGLVPPGIDQQGLTLPVVDQHGLVLPFTDQHGLVSPGLMPISADQQGFVQPSLEATGFIQPGTEQHDLIQSGRFQRALVQRGAYQPGLVQPGADQRGLVRPGMDQSGLAQPGADQRGLVWPGMDQSGLAQPGRDQHGLIQPGTGQHDLVQSGTGQGVLVQPGVDQPGMVQPGRFQRALVQPGAYQPGLVQPGADQIDVVQPGADQHGLVQSGADQSDLAQPGAVQHGLVQPGVDQRGLAQPRADHQRGLVPPGADQRGLVQPGADQHGLVQPGVDQHGLAQPGEVQRSLVQPGIVQRGLVQPGAVQRGLVQPGAVQRGLVQPGVDQRGLVQPGAVQRGLVQPGAVQHGLVQPGADQRGLVQPGVDQRGLVQPGVDQRGLVQPGMDQRGLIQPGADQPGLVQPGAGQLGMVQPGIGQQGMVQPQADPHGLVQPGAYPLGLVQPGAYLHDLSQSGTYPRGLVQPGMDQYGLRQPGAYQPGLIAPGTKLRGSSTFQADSTGFISVRPYQHGMVPPGREQYGQVSPLLASQGLASPGIDRRSLVPPETYQQGLMHPGTDQHSPIPLSTGLGSTHPDQQHVASPGPGEHDQVYPDAAQHGHAFSLFDSHDSMYPGYRGPGYLSADQHGQEGLDPNRTRASDRHGIPAQKAPGQDVTLFRSPDSVDRVLSEGSEVSSEVLSERRNSLRRMSSSFPTAVETFHLMGELSSLYVGLKESMKDLDEEQAGQTDLEKIQFLLAQMVKRTIPPELQEQLKTVKTLAKEVWQEKAKVERLQRILEGEGNQEAGKELKAGELRLQLGVLRVTVADIEKELAELRESQDRGKAAMENSVSEASLYLQDQLDKLRMIIESMLTSSSTLLSMSMAPHKAHTLAPGQIDPEATCPACSLDVSHQVSTLVRRYEQLQDMVNSLAVSRPSKKAKLQRQDEELLGRVQSAILQVQGDCEKLNITTSNLIEDHRQKQKDIAMLYQGLEKLEKEKANREHLEMEIDVKADKSALATKVSRVQFDATTEQLNHMMQELVAKMSGQEQDWQKMLDRLLTEMDNKLDRLELDPVKQLLEDRWKSLRQQLRERPPLYQADEAAAMRRQLLAHFHCLSCDRPLETPVTGHAIPVTPAGPGLPGHHSIRPYTVFELEQVRQHSRNLKLGSAFPRGDLAQMEQSVGRLRSMHSKMLMNIEKVQIHFGGSTKASSQIIRELLHAQCLGSPCYKRVTDMADYTYSTVPRRCGGSHTLTYPYHRSRPQHLPRGLYPTEEIQIAMKHDEVDILGLDGHIYKGRMDTRLPGILRKDSSGTSKRKSQQPRPHVHRPPSLSSNGQLPSRPQSAQISAGNTSER</sequence>
<keyword id="KW-0025">Alternative splicing</keyword>
<keyword id="KW-0966">Cell projection</keyword>
<keyword id="KW-0969">Cilium</keyword>
<keyword id="KW-0175">Coiled coil</keyword>
<keyword id="KW-0963">Cytoplasm</keyword>
<keyword id="KW-0225">Disease variant</keyword>
<keyword id="KW-0282">Flagellum</keyword>
<keyword id="KW-0472">Membrane</keyword>
<keyword id="KW-0539">Nucleus</keyword>
<keyword id="KW-1267">Proteomics identification</keyword>
<keyword id="KW-1185">Reference proteome</keyword>
<accession>Q9H0J4</accession>
<accession>A2RRE1</accession>
<accession>Q96LM3</accession>
<gene>
    <name type="primary">QRICH2</name>
</gene>
<dbReference type="EMBL" id="AL136774">
    <property type="protein sequence ID" value="CAB66708.1"/>
    <property type="molecule type" value="mRNA"/>
</dbReference>
<dbReference type="EMBL" id="BC131559">
    <property type="protein sequence ID" value="AAI31560.1"/>
    <property type="molecule type" value="mRNA"/>
</dbReference>
<dbReference type="EMBL" id="AK058102">
    <property type="protein sequence ID" value="BAB71667.1"/>
    <property type="status" value="ALT_INIT"/>
    <property type="molecule type" value="mRNA"/>
</dbReference>
<dbReference type="RefSeq" id="NP_115510.1">
    <property type="nucleotide sequence ID" value="NM_032134.2"/>
</dbReference>
<dbReference type="SMR" id="Q9H0J4"/>
<dbReference type="BioGRID" id="123869">
    <property type="interactions" value="9"/>
</dbReference>
<dbReference type="DIP" id="DIP-50256N"/>
<dbReference type="FunCoup" id="Q9H0J4">
    <property type="interactions" value="13"/>
</dbReference>
<dbReference type="IntAct" id="Q9H0J4">
    <property type="interactions" value="3"/>
</dbReference>
<dbReference type="STRING" id="9606.ENSP00000262765"/>
<dbReference type="GlyGen" id="Q9H0J4">
    <property type="glycosylation" value="1 site"/>
</dbReference>
<dbReference type="iPTMnet" id="Q9H0J4"/>
<dbReference type="PhosphoSitePlus" id="Q9H0J4"/>
<dbReference type="BioMuta" id="QRICH2"/>
<dbReference type="DMDM" id="74717987"/>
<dbReference type="jPOST" id="Q9H0J4"/>
<dbReference type="MassIVE" id="Q9H0J4"/>
<dbReference type="PaxDb" id="9606-ENSP00000262765"/>
<dbReference type="PeptideAtlas" id="Q9H0J4"/>
<dbReference type="ProteomicsDB" id="80286">
    <molecule id="Q9H0J4-1"/>
</dbReference>
<dbReference type="ProteomicsDB" id="80287">
    <molecule id="Q9H0J4-2"/>
</dbReference>
<dbReference type="ProteomicsDB" id="80288">
    <molecule id="Q9H0J4-3"/>
</dbReference>
<dbReference type="Antibodypedia" id="19682">
    <property type="antibodies" value="14 antibodies from 8 providers"/>
</dbReference>
<dbReference type="DNASU" id="84074"/>
<dbReference type="Ensembl" id="ENST00000262765.10">
    <molecule id="Q9H0J4-1"/>
    <property type="protein sequence ID" value="ENSP00000262765.5"/>
    <property type="gene ID" value="ENSG00000129646.16"/>
</dbReference>
<dbReference type="GeneID" id="84074"/>
<dbReference type="KEGG" id="hsa:84074"/>
<dbReference type="UCSC" id="uc002jrd.1">
    <molecule id="Q9H0J4-1"/>
    <property type="organism name" value="human"/>
</dbReference>
<dbReference type="AGR" id="HGNC:25326"/>
<dbReference type="CTD" id="84074"/>
<dbReference type="DisGeNET" id="84074"/>
<dbReference type="GeneCards" id="QRICH2"/>
<dbReference type="HGNC" id="HGNC:25326">
    <property type="gene designation" value="QRICH2"/>
</dbReference>
<dbReference type="HPA" id="ENSG00000129646">
    <property type="expression patterns" value="Tissue enhanced (testis)"/>
</dbReference>
<dbReference type="MalaCards" id="QRICH2"/>
<dbReference type="MIM" id="618304">
    <property type="type" value="gene"/>
</dbReference>
<dbReference type="MIM" id="618341">
    <property type="type" value="phenotype"/>
</dbReference>
<dbReference type="neXtProt" id="NX_Q9H0J4"/>
<dbReference type="OpenTargets" id="ENSG00000129646"/>
<dbReference type="PharmGKB" id="PA142671107"/>
<dbReference type="VEuPathDB" id="HostDB:ENSG00000129646"/>
<dbReference type="eggNOG" id="ENOG502R9P3">
    <property type="taxonomic scope" value="Eukaryota"/>
</dbReference>
<dbReference type="GeneTree" id="ENSGT00940000161294"/>
<dbReference type="HOGENOM" id="CLU_003234_0_0_1"/>
<dbReference type="InParanoid" id="Q9H0J4"/>
<dbReference type="OrthoDB" id="5981048at2759"/>
<dbReference type="PAN-GO" id="Q9H0J4">
    <property type="GO annotations" value="3 GO annotations based on evolutionary models"/>
</dbReference>
<dbReference type="PhylomeDB" id="Q9H0J4"/>
<dbReference type="TreeFam" id="TF334838"/>
<dbReference type="PathwayCommons" id="Q9H0J4"/>
<dbReference type="SignaLink" id="Q9H0J4"/>
<dbReference type="BioGRID-ORCS" id="84074">
    <property type="hits" value="16 hits in 1148 CRISPR screens"/>
</dbReference>
<dbReference type="ChiTaRS" id="QRICH2">
    <property type="organism name" value="human"/>
</dbReference>
<dbReference type="GenomeRNAi" id="84074"/>
<dbReference type="Pharos" id="Q9H0J4">
    <property type="development level" value="Tdark"/>
</dbReference>
<dbReference type="PRO" id="PR:Q9H0J4"/>
<dbReference type="Proteomes" id="UP000005640">
    <property type="component" value="Chromosome 17"/>
</dbReference>
<dbReference type="RNAct" id="Q9H0J4">
    <property type="molecule type" value="protein"/>
</dbReference>
<dbReference type="Bgee" id="ENSG00000129646">
    <property type="expression patterns" value="Expressed in left testis and 99 other cell types or tissues"/>
</dbReference>
<dbReference type="ExpressionAtlas" id="Q9H0J4">
    <property type="expression patterns" value="baseline and differential"/>
</dbReference>
<dbReference type="GO" id="GO:0005737">
    <property type="term" value="C:cytoplasm"/>
    <property type="evidence" value="ECO:0007669"/>
    <property type="project" value="UniProtKB-SubCell"/>
</dbReference>
<dbReference type="GO" id="GO:0031965">
    <property type="term" value="C:nuclear membrane"/>
    <property type="evidence" value="ECO:0007669"/>
    <property type="project" value="UniProtKB-SubCell"/>
</dbReference>
<dbReference type="GO" id="GO:0036126">
    <property type="term" value="C:sperm flagellum"/>
    <property type="evidence" value="ECO:0000314"/>
    <property type="project" value="UniProtKB"/>
</dbReference>
<dbReference type="GO" id="GO:0030031">
    <property type="term" value="P:cell projection assembly"/>
    <property type="evidence" value="ECO:0000315"/>
    <property type="project" value="UniProtKB"/>
</dbReference>
<dbReference type="GO" id="GO:0030317">
    <property type="term" value="P:flagellated sperm motility"/>
    <property type="evidence" value="ECO:0000315"/>
    <property type="project" value="UniProtKB"/>
</dbReference>
<dbReference type="GO" id="GO:2000059">
    <property type="term" value="P:negative regulation of ubiquitin-dependent protein catabolic process"/>
    <property type="evidence" value="ECO:0000315"/>
    <property type="project" value="UniProtKB"/>
</dbReference>
<dbReference type="InterPro" id="IPR032013">
    <property type="entry name" value="DUF4795"/>
</dbReference>
<dbReference type="PANTHER" id="PTHR46766">
    <property type="entry name" value="GLUTAMINE-RICH PROTEIN 2"/>
    <property type="match status" value="1"/>
</dbReference>
<dbReference type="PANTHER" id="PTHR46766:SF1">
    <property type="entry name" value="GLUTAMINE-RICH PROTEIN 2"/>
    <property type="match status" value="1"/>
</dbReference>
<dbReference type="Pfam" id="PF16043">
    <property type="entry name" value="DUF4795"/>
    <property type="match status" value="1"/>
</dbReference>
<reference key="1">
    <citation type="journal article" date="2001" name="Genome Res.">
        <title>Towards a catalog of human genes and proteins: sequencing and analysis of 500 novel complete protein coding human cDNAs.</title>
        <authorList>
            <person name="Wiemann S."/>
            <person name="Weil B."/>
            <person name="Wellenreuther R."/>
            <person name="Gassenhuber J."/>
            <person name="Glassl S."/>
            <person name="Ansorge W."/>
            <person name="Boecher M."/>
            <person name="Bloecker H."/>
            <person name="Bauersachs S."/>
            <person name="Blum H."/>
            <person name="Lauber J."/>
            <person name="Duesterhoeft A."/>
            <person name="Beyer A."/>
            <person name="Koehrer K."/>
            <person name="Strack N."/>
            <person name="Mewes H.-W."/>
            <person name="Ottenwaelder B."/>
            <person name="Obermaier B."/>
            <person name="Tampe J."/>
            <person name="Heubner D."/>
            <person name="Wambutt R."/>
            <person name="Korn B."/>
            <person name="Klein M."/>
            <person name="Poustka A."/>
        </authorList>
    </citation>
    <scope>NUCLEOTIDE SEQUENCE [LARGE SCALE MRNA] (ISOFORM 1)</scope>
    <source>
        <tissue>Testis</tissue>
    </source>
</reference>
<reference key="2">
    <citation type="journal article" date="2004" name="Genome Res.">
        <title>The status, quality, and expansion of the NIH full-length cDNA project: the Mammalian Gene Collection (MGC).</title>
        <authorList>
            <consortium name="The MGC Project Team"/>
        </authorList>
    </citation>
    <scope>NUCLEOTIDE SEQUENCE [LARGE SCALE MRNA] (ISOFORM 3)</scope>
</reference>
<reference key="3">
    <citation type="journal article" date="2004" name="Nat. Genet.">
        <title>Complete sequencing and characterization of 21,243 full-length human cDNAs.</title>
        <authorList>
            <person name="Ota T."/>
            <person name="Suzuki Y."/>
            <person name="Nishikawa T."/>
            <person name="Otsuki T."/>
            <person name="Sugiyama T."/>
            <person name="Irie R."/>
            <person name="Wakamatsu A."/>
            <person name="Hayashi K."/>
            <person name="Sato H."/>
            <person name="Nagai K."/>
            <person name="Kimura K."/>
            <person name="Makita H."/>
            <person name="Sekine M."/>
            <person name="Obayashi M."/>
            <person name="Nishi T."/>
            <person name="Shibahara T."/>
            <person name="Tanaka T."/>
            <person name="Ishii S."/>
            <person name="Yamamoto J."/>
            <person name="Saito K."/>
            <person name="Kawai Y."/>
            <person name="Isono Y."/>
            <person name="Nakamura Y."/>
            <person name="Nagahari K."/>
            <person name="Murakami K."/>
            <person name="Yasuda T."/>
            <person name="Iwayanagi T."/>
            <person name="Wagatsuma M."/>
            <person name="Shiratori A."/>
            <person name="Sudo H."/>
            <person name="Hosoiri T."/>
            <person name="Kaku Y."/>
            <person name="Kodaira H."/>
            <person name="Kondo H."/>
            <person name="Sugawara M."/>
            <person name="Takahashi M."/>
            <person name="Kanda K."/>
            <person name="Yokoi T."/>
            <person name="Furuya T."/>
            <person name="Kikkawa E."/>
            <person name="Omura Y."/>
            <person name="Abe K."/>
            <person name="Kamihara K."/>
            <person name="Katsuta N."/>
            <person name="Sato K."/>
            <person name="Tanikawa M."/>
            <person name="Yamazaki M."/>
            <person name="Ninomiya K."/>
            <person name="Ishibashi T."/>
            <person name="Yamashita H."/>
            <person name="Murakawa K."/>
            <person name="Fujimori K."/>
            <person name="Tanai H."/>
            <person name="Kimata M."/>
            <person name="Watanabe M."/>
            <person name="Hiraoka S."/>
            <person name="Chiba Y."/>
            <person name="Ishida S."/>
            <person name="Ono Y."/>
            <person name="Takiguchi S."/>
            <person name="Watanabe S."/>
            <person name="Yosida M."/>
            <person name="Hotuta T."/>
            <person name="Kusano J."/>
            <person name="Kanehori K."/>
            <person name="Takahashi-Fujii A."/>
            <person name="Hara H."/>
            <person name="Tanase T.-O."/>
            <person name="Nomura Y."/>
            <person name="Togiya S."/>
            <person name="Komai F."/>
            <person name="Hara R."/>
            <person name="Takeuchi K."/>
            <person name="Arita M."/>
            <person name="Imose N."/>
            <person name="Musashino K."/>
            <person name="Yuuki H."/>
            <person name="Oshima A."/>
            <person name="Sasaki N."/>
            <person name="Aotsuka S."/>
            <person name="Yoshikawa Y."/>
            <person name="Matsunawa H."/>
            <person name="Ichihara T."/>
            <person name="Shiohata N."/>
            <person name="Sano S."/>
            <person name="Moriya S."/>
            <person name="Momiyama H."/>
            <person name="Satoh N."/>
            <person name="Takami S."/>
            <person name="Terashima Y."/>
            <person name="Suzuki O."/>
            <person name="Nakagawa S."/>
            <person name="Senoh A."/>
            <person name="Mizoguchi H."/>
            <person name="Goto Y."/>
            <person name="Shimizu F."/>
            <person name="Wakebe H."/>
            <person name="Hishigaki H."/>
            <person name="Watanabe T."/>
            <person name="Sugiyama A."/>
            <person name="Takemoto M."/>
            <person name="Kawakami B."/>
            <person name="Yamazaki M."/>
            <person name="Watanabe K."/>
            <person name="Kumagai A."/>
            <person name="Itakura S."/>
            <person name="Fukuzumi Y."/>
            <person name="Fujimori Y."/>
            <person name="Komiyama M."/>
            <person name="Tashiro H."/>
            <person name="Tanigami A."/>
            <person name="Fujiwara T."/>
            <person name="Ono T."/>
            <person name="Yamada K."/>
            <person name="Fujii Y."/>
            <person name="Ozaki K."/>
            <person name="Hirao M."/>
            <person name="Ohmori Y."/>
            <person name="Kawabata A."/>
            <person name="Hikiji T."/>
            <person name="Kobatake N."/>
            <person name="Inagaki H."/>
            <person name="Ikema Y."/>
            <person name="Okamoto S."/>
            <person name="Okitani R."/>
            <person name="Kawakami T."/>
            <person name="Noguchi S."/>
            <person name="Itoh T."/>
            <person name="Shigeta K."/>
            <person name="Senba T."/>
            <person name="Matsumura K."/>
            <person name="Nakajima Y."/>
            <person name="Mizuno T."/>
            <person name="Morinaga M."/>
            <person name="Sasaki M."/>
            <person name="Togashi T."/>
            <person name="Oyama M."/>
            <person name="Hata H."/>
            <person name="Watanabe M."/>
            <person name="Komatsu T."/>
            <person name="Mizushima-Sugano J."/>
            <person name="Satoh T."/>
            <person name="Shirai Y."/>
            <person name="Takahashi Y."/>
            <person name="Nakagawa K."/>
            <person name="Okumura K."/>
            <person name="Nagase T."/>
            <person name="Nomura N."/>
            <person name="Kikuchi H."/>
            <person name="Masuho Y."/>
            <person name="Yamashita R."/>
            <person name="Nakai K."/>
            <person name="Yada T."/>
            <person name="Nakamura Y."/>
            <person name="Ohara O."/>
            <person name="Isogai T."/>
            <person name="Sugano S."/>
        </authorList>
    </citation>
    <scope>NUCLEOTIDE SEQUENCE [LARGE SCALE MRNA] OF 993-1663 (ISOFORM 2)</scope>
    <scope>VARIANT GLN-1036</scope>
    <source>
        <tissue>Testis</tissue>
    </source>
</reference>
<reference key="4">
    <citation type="journal article" date="2008" name="J. Proteome Res.">
        <title>Phosphorylation analysis of primary human T lymphocytes using sequential IMAC and titanium oxide enrichment.</title>
        <authorList>
            <person name="Carrascal M."/>
            <person name="Ovelleiro D."/>
            <person name="Casas V."/>
            <person name="Gay M."/>
            <person name="Abian J."/>
        </authorList>
    </citation>
    <scope>IDENTIFICATION BY MASS SPECTROMETRY [LARGE SCALE ANALYSIS]</scope>
    <source>
        <tissue>T-cell</tissue>
    </source>
</reference>
<reference key="5">
    <citation type="journal article" date="2019" name="Clin. Genet.">
        <title>Whole exome sequencing of men with multiple morphological abnormalities of the sperm flagella reveals novel homozygous QRICH2 mutations.</title>
        <authorList>
            <person name="Kherraf Z.E."/>
            <person name="Cazin C."/>
            <person name="Coutton C."/>
            <person name="Amiri-Yekta A."/>
            <person name="Martinez G."/>
            <person name="Boguenet M."/>
            <person name="Fourati Ben Mustapha S."/>
            <person name="Kharouf M."/>
            <person name="Gourabi H."/>
            <person name="Hosseini S.H."/>
            <person name="Daneshipour A."/>
            <person name="Toure A."/>
            <person name="Thierry-Mieg N."/>
            <person name="Zouari R."/>
            <person name="Arnoult C."/>
            <person name="Ray P.F."/>
        </authorList>
    </citation>
    <scope>VARIANTS SPGF35 1167-TYR--ARG-1663 DEL AND 1538-TYR--ARG-1663 DEL</scope>
</reference>
<reference key="6">
    <citation type="journal article" date="2019" name="Nat. Commun.">
        <title>Loss-of-function mutations in QRICH2 cause male infertility with multiple morphological abnormalities of the sperm flagella.</title>
        <authorList>
            <person name="Shen Y."/>
            <person name="Zhang F."/>
            <person name="Li F."/>
            <person name="Jiang X."/>
            <person name="Yang Y."/>
            <person name="Li X."/>
            <person name="Li W."/>
            <person name="Wang X."/>
            <person name="Cheng J."/>
            <person name="Liu M."/>
            <person name="Zhang X."/>
            <person name="Yuan G."/>
            <person name="Pei X."/>
            <person name="Cai K."/>
            <person name="Hu F."/>
            <person name="Sun J."/>
            <person name="Yan L."/>
            <person name="Tang L."/>
            <person name="Jiang C."/>
            <person name="Tu W."/>
            <person name="Xu J."/>
            <person name="Wu H."/>
            <person name="Kong W."/>
            <person name="Li S."/>
            <person name="Wang K."/>
            <person name="Sheng K."/>
            <person name="Zhao X."/>
            <person name="Yue H."/>
            <person name="Yang X."/>
            <person name="Xu W."/>
        </authorList>
    </citation>
    <scope>FUNCTION</scope>
    <scope>TISSUE SPECIFICITY</scope>
    <scope>SUBCELLULAR LOCATION</scope>
    <scope>INTERACTION WITH AKAP3; ODF2 AND TSSK4</scope>
    <scope>INVOLVEMENT IN SPGF35</scope>
    <scope>VARIANTS SPGF35 64-TRP--ARG-1663 DEL; GLU-569; 1013-ARG--ARG-1663 DEL; LYS-1105; GLU-1112; 1127-LEU--ARG-1663 DEL; VAL-1347 AND HIS-1494</scope>
    <scope>CHARACTERIZATION OF VARIANTS SPGF35 64-TRP--ARG-1663 DEL AND 1013-ARG--ARG-1663 DEL</scope>
</reference>
<reference key="7">
    <citation type="journal article" date="2021" name="Hum. Mol. Genet.">
        <title>Loss-of-function missense variant of AKAP4 induced male infertility through reduced interaction with QRICH2 during sperm flagella development.</title>
        <authorList>
            <person name="Zhang G."/>
            <person name="Li D."/>
            <person name="Tu C."/>
            <person name="Meng L."/>
            <person name="Tan Y."/>
            <person name="Ji Z."/>
            <person name="Cheng J."/>
            <person name="Lu G."/>
            <person name="Lin G."/>
            <person name="Zhang H."/>
            <person name="Sun J."/>
            <person name="Wang M."/>
            <person name="Du J."/>
            <person name="Xu W."/>
        </authorList>
    </citation>
    <scope>INTERACTION WITH AKAP4</scope>
</reference>
<name>QRIC2_HUMAN</name>
<organism>
    <name type="scientific">Homo sapiens</name>
    <name type="common">Human</name>
    <dbReference type="NCBI Taxonomy" id="9606"/>
    <lineage>
        <taxon>Eukaryota</taxon>
        <taxon>Metazoa</taxon>
        <taxon>Chordata</taxon>
        <taxon>Craniata</taxon>
        <taxon>Vertebrata</taxon>
        <taxon>Euteleostomi</taxon>
        <taxon>Mammalia</taxon>
        <taxon>Eutheria</taxon>
        <taxon>Euarchontoglires</taxon>
        <taxon>Primates</taxon>
        <taxon>Haplorrhini</taxon>
        <taxon>Catarrhini</taxon>
        <taxon>Hominidae</taxon>
        <taxon>Homo</taxon>
    </lineage>
</organism>
<protein>
    <recommendedName>
        <fullName>Glutamine-rich protein 2</fullName>
    </recommendedName>
</protein>
<evidence type="ECO:0000250" key="1">
    <source>
        <dbReference type="UniProtKB" id="Q3V2A7"/>
    </source>
</evidence>
<evidence type="ECO:0000255" key="2"/>
<evidence type="ECO:0000256" key="3">
    <source>
        <dbReference type="SAM" id="MobiDB-lite"/>
    </source>
</evidence>
<evidence type="ECO:0000269" key="4">
    <source>
    </source>
</evidence>
<evidence type="ECO:0000269" key="5">
    <source>
    </source>
</evidence>
<evidence type="ECO:0000269" key="6">
    <source>
    </source>
</evidence>
<evidence type="ECO:0000269" key="7">
    <source>
    </source>
</evidence>
<evidence type="ECO:0000303" key="8">
    <source>
    </source>
</evidence>
<evidence type="ECO:0000303" key="9">
    <source>
    </source>
</evidence>
<evidence type="ECO:0000305" key="10"/>
<comment type="function">
    <text evidence="5">Has an essential role in the formation of sperm flagella and flagellar structure maintainance. It acts as a suppressor of ubiquitination and degradation of proteins involved in flagellar development and motility.</text>
</comment>
<comment type="subunit">
    <text evidence="5 7">Interacts with AKAP3, ODF2 and TSSK4 (PubMed:30683861). Interacts with AKAP4 (PubMed:34415320).</text>
</comment>
<comment type="subcellular location">
    <subcellularLocation>
        <location evidence="1">Nucleus membrane</location>
    </subcellularLocation>
    <subcellularLocation>
        <location evidence="1">Nucleus</location>
    </subcellularLocation>
    <subcellularLocation>
        <location evidence="1">Cytoplasm</location>
    </subcellularLocation>
    <subcellularLocation>
        <location evidence="5">Cell projection</location>
        <location evidence="5">Cilium</location>
        <location evidence="5">Flagellum</location>
    </subcellularLocation>
    <text evidence="1">Localization varies during spermatozoa development. The protein is distributed in the nuclear membrane of the spermatogonia, in the nucleus of round spermatids, in the nucleus and cytoplasm of early elongating spermatids, in the cytoplasm of late elongating spermatids, and in the flagella of epididymal spermatozoa.</text>
</comment>
<comment type="alternative products">
    <event type="alternative splicing"/>
    <isoform>
        <id>Q9H0J4-1</id>
        <name>1</name>
        <sequence type="displayed"/>
    </isoform>
    <isoform>
        <id>Q9H0J4-2</id>
        <name>2</name>
        <sequence type="described" ref="VSP_027102 VSP_027103"/>
    </isoform>
    <isoform>
        <id>Q9H0J4-3</id>
        <name>3</name>
        <sequence type="described" ref="VSP_027101"/>
    </isoform>
</comment>
<comment type="tissue specificity">
    <text evidence="5">Expressed in the sperm.</text>
</comment>
<comment type="disease" evidence="5 6">
    <disease id="DI-05484">
        <name>Spermatogenic failure 35</name>
        <acronym>SPGF35</acronym>
        <description>An autosomal recessive infertility disorder caused by spermatogenesis defects that result in multiple abnormalities of sperm flagellum and severely impaired spermatozoa motility.</description>
        <dbReference type="MIM" id="618341"/>
    </disease>
    <text>The disease is caused by variants affecting the gene represented in this entry.</text>
</comment>
<comment type="sequence caution" evidence="10">
    <conflict type="erroneous initiation">
        <sequence resource="EMBL-CDS" id="BAB71667"/>
    </conflict>
</comment>
<feature type="chain" id="PRO_0000295814" description="Glutamine-rich protein 2">
    <location>
        <begin position="1"/>
        <end position="1663"/>
    </location>
</feature>
<feature type="region of interest" description="Disordered" evidence="3">
    <location>
        <begin position="80"/>
        <end position="239"/>
    </location>
</feature>
<feature type="region of interest" description="Disordered" evidence="3">
    <location>
        <begin position="423"/>
        <end position="481"/>
    </location>
</feature>
<feature type="region of interest" description="Disordered" evidence="3">
    <location>
        <begin position="575"/>
        <end position="615"/>
    </location>
</feature>
<feature type="region of interest" description="Disordered" evidence="3">
    <location>
        <begin position="880"/>
        <end position="925"/>
    </location>
</feature>
<feature type="region of interest" description="Disordered" evidence="3">
    <location>
        <begin position="948"/>
        <end position="984"/>
    </location>
</feature>
<feature type="region of interest" description="Disordered" evidence="3">
    <location>
        <begin position="1609"/>
        <end position="1663"/>
    </location>
</feature>
<feature type="coiled-coil region" evidence="2">
    <location>
        <begin position="1085"/>
        <end position="1160"/>
    </location>
</feature>
<feature type="coiled-coil region" evidence="2">
    <location>
        <begin position="1286"/>
        <end position="1325"/>
    </location>
</feature>
<feature type="compositionally biased region" description="Polar residues" evidence="3">
    <location>
        <begin position="84"/>
        <end position="103"/>
    </location>
</feature>
<feature type="compositionally biased region" description="Polar residues" evidence="3">
    <location>
        <begin position="131"/>
        <end position="150"/>
    </location>
</feature>
<feature type="compositionally biased region" description="Basic and acidic residues" evidence="3">
    <location>
        <begin position="171"/>
        <end position="182"/>
    </location>
</feature>
<feature type="compositionally biased region" description="Low complexity" evidence="3">
    <location>
        <begin position="206"/>
        <end position="217"/>
    </location>
</feature>
<feature type="compositionally biased region" description="Basic and acidic residues" evidence="3">
    <location>
        <begin position="958"/>
        <end position="975"/>
    </location>
</feature>
<feature type="compositionally biased region" description="Basic and acidic residues" evidence="3">
    <location>
        <begin position="1609"/>
        <end position="1619"/>
    </location>
</feature>
<feature type="compositionally biased region" description="Basic residues" evidence="3">
    <location>
        <begin position="1623"/>
        <end position="1636"/>
    </location>
</feature>
<feature type="compositionally biased region" description="Polar residues" evidence="3">
    <location>
        <begin position="1639"/>
        <end position="1663"/>
    </location>
</feature>
<feature type="splice variant" id="VSP_027101" description="In isoform 3." evidence="9">
    <location>
        <begin position="1"/>
        <end position="1156"/>
    </location>
</feature>
<feature type="splice variant" id="VSP_027102" description="In isoform 2." evidence="8">
    <original>N</original>
    <variation>A</variation>
    <location>
        <position position="1375"/>
    </location>
</feature>
<feature type="splice variant" id="VSP_027103" description="In isoform 2." evidence="8">
    <location>
        <begin position="1376"/>
        <end position="1609"/>
    </location>
</feature>
<feature type="sequence variant" id="VAR_082018" description="In SPGF35; the protein is not detected in patient spermatozoa." evidence="5">
    <location>
        <begin position="64"/>
        <end position="1663"/>
    </location>
</feature>
<feature type="sequence variant" id="VAR_051295" description="In dbSNP:rs6501880.">
    <original>L</original>
    <variation>S</variation>
    <location>
        <position position="202"/>
    </location>
</feature>
<feature type="sequence variant" id="VAR_082019" description="In SPGF35; uncertain significance." evidence="5">
    <original>V</original>
    <variation>E</variation>
    <location>
        <position position="569"/>
    </location>
</feature>
<feature type="sequence variant" id="VAR_051296" description="In dbSNP:rs6501878.">
    <original>I</original>
    <variation>T</variation>
    <location>
        <position position="630"/>
    </location>
</feature>
<feature type="sequence variant" id="VAR_059711" description="In dbSNP:rs6501879.">
    <original>I</original>
    <variation>V</variation>
    <location>
        <position position="630"/>
    </location>
</feature>
<feature type="sequence variant" id="VAR_059712" description="In dbSNP:rs6501874.">
    <original>V</original>
    <variation>D</variation>
    <location>
        <position position="681"/>
    </location>
</feature>
<feature type="sequence variant" id="VAR_051297" description="In dbSNP:rs2279054.">
    <original>H</original>
    <variation>Y</variation>
    <location>
        <position position="906"/>
    </location>
</feature>
<feature type="sequence variant" id="VAR_051298" description="In dbSNP:rs2279053.">
    <original>H</original>
    <variation>R</variation>
    <location>
        <position position="974"/>
    </location>
</feature>
<feature type="sequence variant" id="VAR_082020" description="In SPGF35; weak amount of protein detected in patient spermatozoa." evidence="5">
    <location>
        <begin position="1013"/>
        <end position="1663"/>
    </location>
</feature>
<feature type="sequence variant" id="VAR_051299" description="In dbSNP:rs2279052." evidence="4">
    <original>E</original>
    <variation>Q</variation>
    <location>
        <position position="1036"/>
    </location>
</feature>
<feature type="sequence variant" id="VAR_082021" description="In SPGF35; uncertain significance." evidence="5">
    <original>Q</original>
    <variation>K</variation>
    <location>
        <position position="1105"/>
    </location>
</feature>
<feature type="sequence variant" id="VAR_082022" description="In SPGF35; uncertain significance; dbSNP:rs757438651." evidence="5">
    <original>G</original>
    <variation>E</variation>
    <location>
        <position position="1112"/>
    </location>
</feature>
<feature type="sequence variant" id="VAR_082023" description="In SPGF35." evidence="5">
    <location>
        <begin position="1127"/>
        <end position="1663"/>
    </location>
</feature>
<feature type="sequence variant" id="VAR_089703" description="In SPGF35." evidence="6">
    <location>
        <begin position="1167"/>
        <end position="1663"/>
    </location>
</feature>
<feature type="sequence variant" id="VAR_082024" description="In SPGF35; uncertain significance; dbSNP:rs775768893." evidence="5">
    <original>M</original>
    <variation>V</variation>
    <location>
        <position position="1347"/>
    </location>
</feature>
<feature type="sequence variant" id="VAR_082025" description="In SPGF35; uncertain significance; dbSNP:rs144208097." evidence="5">
    <original>R</original>
    <variation>H</variation>
    <location>
        <position position="1494"/>
    </location>
</feature>
<feature type="sequence variant" id="VAR_089704" description="In SPGF35." evidence="6">
    <location>
        <begin position="1538"/>
        <end position="1663"/>
    </location>
</feature>